<organism>
    <name type="scientific">Onion yellows phytoplasma (strain OY-M)</name>
    <dbReference type="NCBI Taxonomy" id="262768"/>
    <lineage>
        <taxon>Bacteria</taxon>
        <taxon>Bacillati</taxon>
        <taxon>Mycoplasmatota</taxon>
        <taxon>Mollicutes</taxon>
        <taxon>Acholeplasmatales</taxon>
        <taxon>Acholeplasmataceae</taxon>
        <taxon>Candidatus Phytoplasma</taxon>
        <taxon>16SrI (Aster yellows group)</taxon>
    </lineage>
</organism>
<feature type="chain" id="PRO_0000060425" description="tRNA (guanine-N(1)-)-methyltransferase">
    <location>
        <begin position="1"/>
        <end position="242"/>
    </location>
</feature>
<feature type="binding site" evidence="1">
    <location>
        <position position="111"/>
    </location>
    <ligand>
        <name>S-adenosyl-L-methionine</name>
        <dbReference type="ChEBI" id="CHEBI:59789"/>
    </ligand>
</feature>
<feature type="binding site" evidence="1">
    <location>
        <begin position="130"/>
        <end position="135"/>
    </location>
    <ligand>
        <name>S-adenosyl-L-methionine</name>
        <dbReference type="ChEBI" id="CHEBI:59789"/>
    </ligand>
</feature>
<comment type="function">
    <text evidence="1">Specifically methylates guanosine-37 in various tRNAs.</text>
</comment>
<comment type="catalytic activity">
    <reaction evidence="1">
        <text>guanosine(37) in tRNA + S-adenosyl-L-methionine = N(1)-methylguanosine(37) in tRNA + S-adenosyl-L-homocysteine + H(+)</text>
        <dbReference type="Rhea" id="RHEA:36899"/>
        <dbReference type="Rhea" id="RHEA-COMP:10145"/>
        <dbReference type="Rhea" id="RHEA-COMP:10147"/>
        <dbReference type="ChEBI" id="CHEBI:15378"/>
        <dbReference type="ChEBI" id="CHEBI:57856"/>
        <dbReference type="ChEBI" id="CHEBI:59789"/>
        <dbReference type="ChEBI" id="CHEBI:73542"/>
        <dbReference type="ChEBI" id="CHEBI:74269"/>
        <dbReference type="EC" id="2.1.1.228"/>
    </reaction>
</comment>
<comment type="subunit">
    <text evidence="1">Homodimer.</text>
</comment>
<comment type="subcellular location">
    <subcellularLocation>
        <location evidence="1">Cytoplasm</location>
    </subcellularLocation>
</comment>
<comment type="similarity">
    <text evidence="1">Belongs to the RNA methyltransferase TrmD family.</text>
</comment>
<accession>Q6YQA4</accession>
<dbReference type="EC" id="2.1.1.228" evidence="1"/>
<dbReference type="EMBL" id="AP006628">
    <property type="protein sequence ID" value="BAD04556.1"/>
    <property type="molecule type" value="Genomic_DNA"/>
</dbReference>
<dbReference type="SMR" id="Q6YQA4"/>
<dbReference type="STRING" id="262768.PAM_471"/>
<dbReference type="KEGG" id="poy:PAM_471"/>
<dbReference type="eggNOG" id="COG0336">
    <property type="taxonomic scope" value="Bacteria"/>
</dbReference>
<dbReference type="HOGENOM" id="CLU_047363_0_1_14"/>
<dbReference type="BioCyc" id="OYEL262768:G1G26-556-MONOMER"/>
<dbReference type="Proteomes" id="UP000002523">
    <property type="component" value="Chromosome"/>
</dbReference>
<dbReference type="GO" id="GO:0005829">
    <property type="term" value="C:cytosol"/>
    <property type="evidence" value="ECO:0007669"/>
    <property type="project" value="TreeGrafter"/>
</dbReference>
<dbReference type="GO" id="GO:0052906">
    <property type="term" value="F:tRNA (guanine(37)-N1)-methyltransferase activity"/>
    <property type="evidence" value="ECO:0007669"/>
    <property type="project" value="UniProtKB-UniRule"/>
</dbReference>
<dbReference type="GO" id="GO:0002939">
    <property type="term" value="P:tRNA N1-guanine methylation"/>
    <property type="evidence" value="ECO:0007669"/>
    <property type="project" value="TreeGrafter"/>
</dbReference>
<dbReference type="CDD" id="cd18080">
    <property type="entry name" value="TrmD-like"/>
    <property type="match status" value="1"/>
</dbReference>
<dbReference type="FunFam" id="1.10.1270.20:FF:000001">
    <property type="entry name" value="tRNA (guanine-N(1)-)-methyltransferase"/>
    <property type="match status" value="1"/>
</dbReference>
<dbReference type="FunFam" id="3.40.1280.10:FF:000001">
    <property type="entry name" value="tRNA (guanine-N(1)-)-methyltransferase"/>
    <property type="match status" value="1"/>
</dbReference>
<dbReference type="Gene3D" id="3.40.1280.10">
    <property type="match status" value="1"/>
</dbReference>
<dbReference type="Gene3D" id="1.10.1270.20">
    <property type="entry name" value="tRNA(m1g37)methyltransferase, domain 2"/>
    <property type="match status" value="1"/>
</dbReference>
<dbReference type="HAMAP" id="MF_00605">
    <property type="entry name" value="TrmD"/>
    <property type="match status" value="1"/>
</dbReference>
<dbReference type="InterPro" id="IPR029028">
    <property type="entry name" value="Alpha/beta_knot_MTases"/>
</dbReference>
<dbReference type="InterPro" id="IPR023148">
    <property type="entry name" value="tRNA_m1G_MeTrfase_C_sf"/>
</dbReference>
<dbReference type="InterPro" id="IPR002649">
    <property type="entry name" value="tRNA_m1G_MeTrfase_TrmD"/>
</dbReference>
<dbReference type="InterPro" id="IPR029026">
    <property type="entry name" value="tRNA_m1G_MTases_N"/>
</dbReference>
<dbReference type="InterPro" id="IPR016009">
    <property type="entry name" value="tRNA_MeTrfase_TRMD/TRM10"/>
</dbReference>
<dbReference type="NCBIfam" id="NF000648">
    <property type="entry name" value="PRK00026.1"/>
    <property type="match status" value="1"/>
</dbReference>
<dbReference type="NCBIfam" id="TIGR00088">
    <property type="entry name" value="trmD"/>
    <property type="match status" value="1"/>
</dbReference>
<dbReference type="PANTHER" id="PTHR46417">
    <property type="entry name" value="TRNA (GUANINE-N(1)-)-METHYLTRANSFERASE"/>
    <property type="match status" value="1"/>
</dbReference>
<dbReference type="PANTHER" id="PTHR46417:SF1">
    <property type="entry name" value="TRNA (GUANINE-N(1)-)-METHYLTRANSFERASE"/>
    <property type="match status" value="1"/>
</dbReference>
<dbReference type="Pfam" id="PF01746">
    <property type="entry name" value="tRNA_m1G_MT"/>
    <property type="match status" value="1"/>
</dbReference>
<dbReference type="PIRSF" id="PIRSF000386">
    <property type="entry name" value="tRNA_mtase"/>
    <property type="match status" value="1"/>
</dbReference>
<dbReference type="SUPFAM" id="SSF75217">
    <property type="entry name" value="alpha/beta knot"/>
    <property type="match status" value="1"/>
</dbReference>
<protein>
    <recommendedName>
        <fullName evidence="1">tRNA (guanine-N(1)-)-methyltransferase</fullName>
        <ecNumber evidence="1">2.1.1.228</ecNumber>
    </recommendedName>
    <alternativeName>
        <fullName evidence="1">M1G-methyltransferase</fullName>
    </alternativeName>
    <alternativeName>
        <fullName evidence="1">tRNA [GM37] methyltransferase</fullName>
    </alternativeName>
</protein>
<proteinExistence type="inferred from homology"/>
<reference key="1">
    <citation type="journal article" date="2004" name="Nat. Genet.">
        <title>Reductive evolution suggested from the complete genome sequence of a plant-pathogenic phytoplasma.</title>
        <authorList>
            <person name="Oshima K."/>
            <person name="Kakizawa S."/>
            <person name="Nishigawa H."/>
            <person name="Jung H.-Y."/>
            <person name="Wei W."/>
            <person name="Suzuki S."/>
            <person name="Arashida R."/>
            <person name="Nakata D."/>
            <person name="Miyata S."/>
            <person name="Ugaki M."/>
            <person name="Namba S."/>
        </authorList>
    </citation>
    <scope>NUCLEOTIDE SEQUENCE [LARGE SCALE GENOMIC DNA]</scope>
    <source>
        <strain>OY-M</strain>
    </source>
</reference>
<evidence type="ECO:0000255" key="1">
    <source>
        <dbReference type="HAMAP-Rule" id="MF_00605"/>
    </source>
</evidence>
<name>TRMD_ONYPE</name>
<keyword id="KW-0963">Cytoplasm</keyword>
<keyword id="KW-0489">Methyltransferase</keyword>
<keyword id="KW-0949">S-adenosyl-L-methionine</keyword>
<keyword id="KW-0808">Transferase</keyword>
<keyword id="KW-0819">tRNA processing</keyword>
<gene>
    <name evidence="1" type="primary">trmD</name>
    <name type="ordered locus">PAM_471</name>
</gene>
<sequence length="242" mass="27637">MIIEIITIFPLFFKSFCETSIIKRALEQKKVQIKLHDLRTYSKNKHNQVDDSVYGGGVGMLLSFPPFFDCLQKIKTPQSKVILLSPQGKIFNQIHATNFAQKETHLIILCGNYEGVDARILQYIDAEISIGDYVLTGGEIAATVLVDAITRLLPEVIKEQSFLEDSHQQGLLKHPQYTRPQSYLNHEVPAVLLSGNHAKIRCWRQKESLKATLQKRPDLLENKKLTLEQTKLLTEIKQELQK</sequence>